<name>KTHY_NITEC</name>
<dbReference type="EC" id="2.7.4.9" evidence="1"/>
<dbReference type="EMBL" id="CP000450">
    <property type="protein sequence ID" value="ABI58811.1"/>
    <property type="molecule type" value="Genomic_DNA"/>
</dbReference>
<dbReference type="RefSeq" id="WP_011633653.1">
    <property type="nucleotide sequence ID" value="NC_008344.1"/>
</dbReference>
<dbReference type="SMR" id="Q0AIL5"/>
<dbReference type="STRING" id="335283.Neut_0536"/>
<dbReference type="KEGG" id="net:Neut_0536"/>
<dbReference type="eggNOG" id="COG0125">
    <property type="taxonomic scope" value="Bacteria"/>
</dbReference>
<dbReference type="HOGENOM" id="CLU_049131_0_2_4"/>
<dbReference type="OrthoDB" id="9774907at2"/>
<dbReference type="Proteomes" id="UP000001966">
    <property type="component" value="Chromosome"/>
</dbReference>
<dbReference type="GO" id="GO:0005829">
    <property type="term" value="C:cytosol"/>
    <property type="evidence" value="ECO:0007669"/>
    <property type="project" value="TreeGrafter"/>
</dbReference>
<dbReference type="GO" id="GO:0005524">
    <property type="term" value="F:ATP binding"/>
    <property type="evidence" value="ECO:0007669"/>
    <property type="project" value="UniProtKB-UniRule"/>
</dbReference>
<dbReference type="GO" id="GO:0004798">
    <property type="term" value="F:dTMP kinase activity"/>
    <property type="evidence" value="ECO:0007669"/>
    <property type="project" value="UniProtKB-UniRule"/>
</dbReference>
<dbReference type="GO" id="GO:0006233">
    <property type="term" value="P:dTDP biosynthetic process"/>
    <property type="evidence" value="ECO:0007669"/>
    <property type="project" value="InterPro"/>
</dbReference>
<dbReference type="GO" id="GO:0006235">
    <property type="term" value="P:dTTP biosynthetic process"/>
    <property type="evidence" value="ECO:0007669"/>
    <property type="project" value="UniProtKB-UniRule"/>
</dbReference>
<dbReference type="GO" id="GO:0006227">
    <property type="term" value="P:dUDP biosynthetic process"/>
    <property type="evidence" value="ECO:0007669"/>
    <property type="project" value="TreeGrafter"/>
</dbReference>
<dbReference type="CDD" id="cd01672">
    <property type="entry name" value="TMPK"/>
    <property type="match status" value="1"/>
</dbReference>
<dbReference type="FunFam" id="3.40.50.300:FF:000225">
    <property type="entry name" value="Thymidylate kinase"/>
    <property type="match status" value="1"/>
</dbReference>
<dbReference type="Gene3D" id="3.40.50.300">
    <property type="entry name" value="P-loop containing nucleotide triphosphate hydrolases"/>
    <property type="match status" value="1"/>
</dbReference>
<dbReference type="HAMAP" id="MF_00165">
    <property type="entry name" value="Thymidylate_kinase"/>
    <property type="match status" value="1"/>
</dbReference>
<dbReference type="InterPro" id="IPR027417">
    <property type="entry name" value="P-loop_NTPase"/>
</dbReference>
<dbReference type="InterPro" id="IPR039430">
    <property type="entry name" value="Thymidylate_kin-like_dom"/>
</dbReference>
<dbReference type="InterPro" id="IPR018094">
    <property type="entry name" value="Thymidylate_kinase"/>
</dbReference>
<dbReference type="NCBIfam" id="TIGR00041">
    <property type="entry name" value="DTMP_kinase"/>
    <property type="match status" value="1"/>
</dbReference>
<dbReference type="PANTHER" id="PTHR10344">
    <property type="entry name" value="THYMIDYLATE KINASE"/>
    <property type="match status" value="1"/>
</dbReference>
<dbReference type="PANTHER" id="PTHR10344:SF4">
    <property type="entry name" value="UMP-CMP KINASE 2, MITOCHONDRIAL"/>
    <property type="match status" value="1"/>
</dbReference>
<dbReference type="Pfam" id="PF02223">
    <property type="entry name" value="Thymidylate_kin"/>
    <property type="match status" value="1"/>
</dbReference>
<dbReference type="SUPFAM" id="SSF52540">
    <property type="entry name" value="P-loop containing nucleoside triphosphate hydrolases"/>
    <property type="match status" value="1"/>
</dbReference>
<evidence type="ECO:0000255" key="1">
    <source>
        <dbReference type="HAMAP-Rule" id="MF_00165"/>
    </source>
</evidence>
<sequence>MQRGKFITFEGIDGAGKSTHLAWLASFLRDKGLEVIVTREPGSTALGEQLRQLLLDHRQAMHAETETLLMFAARREHLDKVILPALERGAWVISDRFTDASFAYQGGGRGVPSARLEILEQWVQKGFSPDLTVYFDVPVTISRQRVQSARTADRFELEPDLFFERVRQAYLQRAKQFSERIRVVDGSLSLEEVRTAMVEVVEKFWSAQASSGYRM</sequence>
<keyword id="KW-0067">ATP-binding</keyword>
<keyword id="KW-0418">Kinase</keyword>
<keyword id="KW-0545">Nucleotide biosynthesis</keyword>
<keyword id="KW-0547">Nucleotide-binding</keyword>
<keyword id="KW-0808">Transferase</keyword>
<feature type="chain" id="PRO_1000023234" description="Thymidylate kinase">
    <location>
        <begin position="1"/>
        <end position="215"/>
    </location>
</feature>
<feature type="binding site" evidence="1">
    <location>
        <begin position="11"/>
        <end position="18"/>
    </location>
    <ligand>
        <name>ATP</name>
        <dbReference type="ChEBI" id="CHEBI:30616"/>
    </ligand>
</feature>
<comment type="function">
    <text evidence="1">Phosphorylation of dTMP to form dTDP in both de novo and salvage pathways of dTTP synthesis.</text>
</comment>
<comment type="catalytic activity">
    <reaction evidence="1">
        <text>dTMP + ATP = dTDP + ADP</text>
        <dbReference type="Rhea" id="RHEA:13517"/>
        <dbReference type="ChEBI" id="CHEBI:30616"/>
        <dbReference type="ChEBI" id="CHEBI:58369"/>
        <dbReference type="ChEBI" id="CHEBI:63528"/>
        <dbReference type="ChEBI" id="CHEBI:456216"/>
        <dbReference type="EC" id="2.7.4.9"/>
    </reaction>
</comment>
<comment type="similarity">
    <text evidence="1">Belongs to the thymidylate kinase family.</text>
</comment>
<proteinExistence type="inferred from homology"/>
<gene>
    <name evidence="1" type="primary">tmk</name>
    <name type="ordered locus">Neut_0536</name>
</gene>
<protein>
    <recommendedName>
        <fullName evidence="1">Thymidylate kinase</fullName>
        <ecNumber evidence="1">2.7.4.9</ecNumber>
    </recommendedName>
    <alternativeName>
        <fullName evidence="1">dTMP kinase</fullName>
    </alternativeName>
</protein>
<organism>
    <name type="scientific">Nitrosomonas eutropha (strain DSM 101675 / C91 / Nm57)</name>
    <dbReference type="NCBI Taxonomy" id="335283"/>
    <lineage>
        <taxon>Bacteria</taxon>
        <taxon>Pseudomonadati</taxon>
        <taxon>Pseudomonadota</taxon>
        <taxon>Betaproteobacteria</taxon>
        <taxon>Nitrosomonadales</taxon>
        <taxon>Nitrosomonadaceae</taxon>
        <taxon>Nitrosomonas</taxon>
    </lineage>
</organism>
<reference key="1">
    <citation type="journal article" date="2007" name="Environ. Microbiol.">
        <title>Whole-genome analysis of the ammonia-oxidizing bacterium, Nitrosomonas eutropha C91: implications for niche adaptation.</title>
        <authorList>
            <person name="Stein L.Y."/>
            <person name="Arp D.J."/>
            <person name="Berube P.M."/>
            <person name="Chain P.S."/>
            <person name="Hauser L."/>
            <person name="Jetten M.S."/>
            <person name="Klotz M.G."/>
            <person name="Larimer F.W."/>
            <person name="Norton J.M."/>
            <person name="Op den Camp H.J.M."/>
            <person name="Shin M."/>
            <person name="Wei X."/>
        </authorList>
    </citation>
    <scope>NUCLEOTIDE SEQUENCE [LARGE SCALE GENOMIC DNA]</scope>
    <source>
        <strain>DSM 101675 / C91 / Nm57</strain>
    </source>
</reference>
<accession>Q0AIL5</accession>